<evidence type="ECO:0000255" key="1">
    <source>
        <dbReference type="HAMAP-Rule" id="MF_01323"/>
    </source>
</evidence>
<protein>
    <recommendedName>
        <fullName evidence="1">DNA-directed RNA polymerase subunit beta'</fullName>
        <ecNumber evidence="1">2.7.7.6</ecNumber>
    </recommendedName>
    <alternativeName>
        <fullName evidence="1">PEP</fullName>
    </alternativeName>
    <alternativeName>
        <fullName evidence="1">Plastid-encoded RNA polymerase subunit beta'</fullName>
        <shortName evidence="1">RNA polymerase subunit beta'</shortName>
    </alternativeName>
</protein>
<feature type="chain" id="PRO_0000067879" description="DNA-directed RNA polymerase subunit beta'">
    <location>
        <begin position="1"/>
        <end position="683"/>
    </location>
</feature>
<feature type="binding site" evidence="1">
    <location>
        <position position="69"/>
    </location>
    <ligand>
        <name>Zn(2+)</name>
        <dbReference type="ChEBI" id="CHEBI:29105"/>
    </ligand>
</feature>
<feature type="binding site" evidence="1">
    <location>
        <position position="71"/>
    </location>
    <ligand>
        <name>Zn(2+)</name>
        <dbReference type="ChEBI" id="CHEBI:29105"/>
    </ligand>
</feature>
<feature type="binding site" evidence="1">
    <location>
        <position position="87"/>
    </location>
    <ligand>
        <name>Zn(2+)</name>
        <dbReference type="ChEBI" id="CHEBI:29105"/>
    </ligand>
</feature>
<feature type="binding site" evidence="1">
    <location>
        <position position="90"/>
    </location>
    <ligand>
        <name>Zn(2+)</name>
        <dbReference type="ChEBI" id="CHEBI:29105"/>
    </ligand>
</feature>
<feature type="binding site" evidence="1">
    <location>
        <position position="489"/>
    </location>
    <ligand>
        <name>Mg(2+)</name>
        <dbReference type="ChEBI" id="CHEBI:18420"/>
    </ligand>
</feature>
<feature type="binding site" evidence="1">
    <location>
        <position position="491"/>
    </location>
    <ligand>
        <name>Mg(2+)</name>
        <dbReference type="ChEBI" id="CHEBI:18420"/>
    </ligand>
</feature>
<feature type="binding site" evidence="1">
    <location>
        <position position="493"/>
    </location>
    <ligand>
        <name>Mg(2+)</name>
        <dbReference type="ChEBI" id="CHEBI:18420"/>
    </ligand>
</feature>
<reference key="1">
    <citation type="journal article" date="1990" name="Mol. Gen. Genet.">
        <title>Nucleotide sequence of the maize chloroplast rpo B/C1/C2 operon: comparison between the derived protein primary structures from various organisms with respect to functional domains.</title>
        <authorList>
            <person name="Igloi G.L."/>
            <person name="Meinke A."/>
            <person name="Doery I."/>
            <person name="Koessel H."/>
        </authorList>
    </citation>
    <scope>NUCLEOTIDE SEQUENCE [LARGE SCALE GENOMIC DNA]</scope>
    <source>
        <strain>cv. B73</strain>
    </source>
</reference>
<reference key="2">
    <citation type="journal article" date="1990" name="Nucleic Acids Res.">
        <title>Nucleotide and derived amino acid sequence of rps2 from maize chloroplasts.</title>
        <authorList>
            <person name="Igloi G.L."/>
            <person name="Meinke A."/>
            <person name="Doery I."/>
            <person name="Koessel H."/>
        </authorList>
    </citation>
    <scope>NUCLEOTIDE SEQUENCE [GENOMIC DNA]</scope>
</reference>
<reference key="3">
    <citation type="journal article" date="1995" name="J. Mol. Biol.">
        <title>Complete sequence of the maize chloroplast genome: gene content, hotspots of divergence and fine tuning of genetic information by transcript editing.</title>
        <authorList>
            <person name="Maier R.M."/>
            <person name="Neckermann K."/>
            <person name="Igloi G.L."/>
            <person name="Koessel H."/>
        </authorList>
    </citation>
    <scope>NUCLEOTIDE SEQUENCE [LARGE SCALE GENOMIC DNA]</scope>
    <source>
        <strain>cv. B73</strain>
    </source>
</reference>
<reference key="4">
    <citation type="journal article" date="1990" name="Proc. Natl. Acad. Sci. U.S.A.">
        <title>Maize chloroplast RNA polymerase: the 180-, 120-, and 38-kilodalton polypeptides are encoded in chloroplast genes.</title>
        <authorList>
            <person name="Hu J."/>
            <person name="Bogorad L."/>
        </authorList>
    </citation>
    <scope>NUCLEOTIDE SEQUENCE [GENOMIC DNA] OF 1-54</scope>
</reference>
<reference key="5">
    <citation type="journal article" date="1991" name="Nucleic Acids Res.">
        <title>Maize chloroplast RNA polymerase: the 78-kilodalton polypeptide is encoded by the plastid rpoC1 gene.</title>
        <authorList>
            <person name="Hu J."/>
            <person name="Troxler R.F."/>
            <person name="Bogorad L."/>
        </authorList>
    </citation>
    <scope>NUCLEOTIDE SEQUENCE [GENOMIC DNA] OF 1-54</scope>
</reference>
<organism>
    <name type="scientific">Zea mays</name>
    <name type="common">Maize</name>
    <dbReference type="NCBI Taxonomy" id="4577"/>
    <lineage>
        <taxon>Eukaryota</taxon>
        <taxon>Viridiplantae</taxon>
        <taxon>Streptophyta</taxon>
        <taxon>Embryophyta</taxon>
        <taxon>Tracheophyta</taxon>
        <taxon>Spermatophyta</taxon>
        <taxon>Magnoliopsida</taxon>
        <taxon>Liliopsida</taxon>
        <taxon>Poales</taxon>
        <taxon>Poaceae</taxon>
        <taxon>PACMAD clade</taxon>
        <taxon>Panicoideae</taxon>
        <taxon>Andropogonodae</taxon>
        <taxon>Andropogoneae</taxon>
        <taxon>Tripsacinae</taxon>
        <taxon>Zea</taxon>
    </lineage>
</organism>
<dbReference type="EC" id="2.7.7.6" evidence="1"/>
<dbReference type="EMBL" id="X17318">
    <property type="protein sequence ID" value="CAA35196.1"/>
    <property type="molecule type" value="Genomic_DNA"/>
</dbReference>
<dbReference type="EMBL" id="X86563">
    <property type="protein sequence ID" value="CAA60277.1"/>
    <property type="molecule type" value="Genomic_DNA"/>
</dbReference>
<dbReference type="EMBL" id="M31207">
    <property type="protein sequence ID" value="AAA84488.1"/>
    <property type="molecule type" value="Genomic_DNA"/>
</dbReference>
<dbReference type="PIR" id="S12801">
    <property type="entry name" value="RNZMB1"/>
</dbReference>
<dbReference type="RefSeq" id="NP_043016.1">
    <property type="nucleotide sequence ID" value="NC_001666.2"/>
</dbReference>
<dbReference type="SMR" id="P16024"/>
<dbReference type="FunCoup" id="P16024">
    <property type="interactions" value="94"/>
</dbReference>
<dbReference type="STRING" id="4577.P16024"/>
<dbReference type="PaxDb" id="4577-GRMZM5G899366_P01"/>
<dbReference type="GeneID" id="845226"/>
<dbReference type="KEGG" id="zma:845226"/>
<dbReference type="MaizeGDB" id="69581"/>
<dbReference type="eggNOG" id="ENOG502QPYA">
    <property type="taxonomic scope" value="Eukaryota"/>
</dbReference>
<dbReference type="HOGENOM" id="CLU_030022_2_0_1"/>
<dbReference type="InParanoid" id="P16024"/>
<dbReference type="OMA" id="WGERTLP"/>
<dbReference type="OrthoDB" id="35434at2759"/>
<dbReference type="Proteomes" id="UP000007305">
    <property type="component" value="Chloroplast"/>
</dbReference>
<dbReference type="ExpressionAtlas" id="P16024">
    <property type="expression patterns" value="baseline and differential"/>
</dbReference>
<dbReference type="GO" id="GO:0009507">
    <property type="term" value="C:chloroplast"/>
    <property type="evidence" value="ECO:0007669"/>
    <property type="project" value="UniProtKB-SubCell"/>
</dbReference>
<dbReference type="GO" id="GO:0000428">
    <property type="term" value="C:DNA-directed RNA polymerase complex"/>
    <property type="evidence" value="ECO:0007669"/>
    <property type="project" value="UniProtKB-KW"/>
</dbReference>
<dbReference type="GO" id="GO:0005739">
    <property type="term" value="C:mitochondrion"/>
    <property type="evidence" value="ECO:0007669"/>
    <property type="project" value="GOC"/>
</dbReference>
<dbReference type="GO" id="GO:0003677">
    <property type="term" value="F:DNA binding"/>
    <property type="evidence" value="ECO:0007669"/>
    <property type="project" value="UniProtKB-UniRule"/>
</dbReference>
<dbReference type="GO" id="GO:0003899">
    <property type="term" value="F:DNA-directed RNA polymerase activity"/>
    <property type="evidence" value="ECO:0007669"/>
    <property type="project" value="UniProtKB-UniRule"/>
</dbReference>
<dbReference type="GO" id="GO:0000287">
    <property type="term" value="F:magnesium ion binding"/>
    <property type="evidence" value="ECO:0007669"/>
    <property type="project" value="UniProtKB-UniRule"/>
</dbReference>
<dbReference type="GO" id="GO:0008270">
    <property type="term" value="F:zinc ion binding"/>
    <property type="evidence" value="ECO:0007669"/>
    <property type="project" value="UniProtKB-UniRule"/>
</dbReference>
<dbReference type="GO" id="GO:0006351">
    <property type="term" value="P:DNA-templated transcription"/>
    <property type="evidence" value="ECO:0007669"/>
    <property type="project" value="UniProtKB-UniRule"/>
</dbReference>
<dbReference type="Gene3D" id="1.10.40.90">
    <property type="match status" value="1"/>
</dbReference>
<dbReference type="Gene3D" id="2.40.40.20">
    <property type="match status" value="1"/>
</dbReference>
<dbReference type="Gene3D" id="4.10.860.120">
    <property type="entry name" value="RNA polymerase II, clamp domain"/>
    <property type="match status" value="1"/>
</dbReference>
<dbReference type="Gene3D" id="1.10.274.100">
    <property type="entry name" value="RNA polymerase Rpb1, domain 3"/>
    <property type="match status" value="1"/>
</dbReference>
<dbReference type="HAMAP" id="MF_01323">
    <property type="entry name" value="RNApol_bact_RpoC1"/>
    <property type="match status" value="1"/>
</dbReference>
<dbReference type="InterPro" id="IPR045867">
    <property type="entry name" value="DNA-dir_RpoC_beta_prime"/>
</dbReference>
<dbReference type="InterPro" id="IPR000722">
    <property type="entry name" value="RNA_pol_asu"/>
</dbReference>
<dbReference type="InterPro" id="IPR006592">
    <property type="entry name" value="RNA_pol_N"/>
</dbReference>
<dbReference type="InterPro" id="IPR007080">
    <property type="entry name" value="RNA_pol_Rpb1_1"/>
</dbReference>
<dbReference type="InterPro" id="IPR042102">
    <property type="entry name" value="RNA_pol_Rpb1_3_sf"/>
</dbReference>
<dbReference type="InterPro" id="IPR044893">
    <property type="entry name" value="RNA_pol_Rpb1_clamp_domain"/>
</dbReference>
<dbReference type="InterPro" id="IPR034678">
    <property type="entry name" value="RNApol_RpoC1"/>
</dbReference>
<dbReference type="PANTHER" id="PTHR19376">
    <property type="entry name" value="DNA-DIRECTED RNA POLYMERASE"/>
    <property type="match status" value="1"/>
</dbReference>
<dbReference type="PANTHER" id="PTHR19376:SF54">
    <property type="entry name" value="DNA-DIRECTED RNA POLYMERASE SUBUNIT BETA"/>
    <property type="match status" value="1"/>
</dbReference>
<dbReference type="Pfam" id="PF04997">
    <property type="entry name" value="RNA_pol_Rpb1_1"/>
    <property type="match status" value="1"/>
</dbReference>
<dbReference type="Pfam" id="PF00623">
    <property type="entry name" value="RNA_pol_Rpb1_2"/>
    <property type="match status" value="2"/>
</dbReference>
<dbReference type="SMART" id="SM00663">
    <property type="entry name" value="RPOLA_N"/>
    <property type="match status" value="1"/>
</dbReference>
<dbReference type="SUPFAM" id="SSF64484">
    <property type="entry name" value="beta and beta-prime subunits of DNA dependent RNA-polymerase"/>
    <property type="match status" value="1"/>
</dbReference>
<name>RPOC1_MAIZE</name>
<comment type="function">
    <text evidence="1">DNA-dependent RNA polymerase catalyzes the transcription of DNA into RNA using the four ribonucleoside triphosphates as substrates.</text>
</comment>
<comment type="catalytic activity">
    <reaction evidence="1">
        <text>RNA(n) + a ribonucleoside 5'-triphosphate = RNA(n+1) + diphosphate</text>
        <dbReference type="Rhea" id="RHEA:21248"/>
        <dbReference type="Rhea" id="RHEA-COMP:14527"/>
        <dbReference type="Rhea" id="RHEA-COMP:17342"/>
        <dbReference type="ChEBI" id="CHEBI:33019"/>
        <dbReference type="ChEBI" id="CHEBI:61557"/>
        <dbReference type="ChEBI" id="CHEBI:140395"/>
        <dbReference type="EC" id="2.7.7.6"/>
    </reaction>
</comment>
<comment type="cofactor">
    <cofactor evidence="1">
        <name>Mg(2+)</name>
        <dbReference type="ChEBI" id="CHEBI:18420"/>
    </cofactor>
    <text evidence="1">Binds 1 Mg(2+) ion per subunit.</text>
</comment>
<comment type="cofactor">
    <cofactor evidence="1">
        <name>Zn(2+)</name>
        <dbReference type="ChEBI" id="CHEBI:29105"/>
    </cofactor>
    <text evidence="1">Binds 1 Zn(2+) ion per subunit.</text>
</comment>
<comment type="subunit">
    <text evidence="1">In plastids the minimal PEP RNA polymerase catalytic core is composed of four subunits: alpha, beta, beta', and beta''. When a (nuclear-encoded) sigma factor is associated with the core the holoenzyme is formed, which can initiate transcription.</text>
</comment>
<comment type="subcellular location">
    <subcellularLocation>
        <location evidence="1">Plastid</location>
        <location evidence="1">Chloroplast</location>
    </subcellularLocation>
</comment>
<comment type="similarity">
    <text evidence="1">Belongs to the RNA polymerase beta' chain family. RpoC1 subfamily.</text>
</comment>
<proteinExistence type="inferred from homology"/>
<sequence length="683" mass="78323">MIDQYKHKQLQIGLVSPQQIKAWAKKILPNGEVVGEVTRPSTFHYKTDKPEKDGLFCERIFGPIKSGICACGNSRASVRENEDERFCQKCGVEFVDSRIRRYQMGYIKLACPVTHVWYLKGLPSYIANLLDKPLKKLEGLVYGDFSFARPSAKKPTFLRLRGLFEDEISSCNHSISPFFSTPGFATFRNREIATGAGAIREQLADLDLRIIIENSLVEWKELEDEGYSGDEWEDRKRRIRKVFLIRRMQLAKHFIQTNVEPEWMVLCLLPVLPPELRPIVYRSGDKVVTSDINELYKRVIRRNNNLAYLLKRSELAPADLVMCQEKLVQEAVDTLLDSGSRGQPTRDGHNKVYKSLSDVIEGKEGRFRETLLGKRVDYSGRSVIVVGPSLSLHQCGLPLEIAIKLFQLFVIRDLITKRATSNVRIAKRKIWEKEPIVWEILQEVMRGHPVLLNRAPTLHRLGIQAFQPTLVEGRTICLHPLVCKGFNADFDGDQMAVHLPLSLEAQAEARLLMFSHMNLLSPAIGDPICVPTQDMLIGLYVLTIGNRLGICANRYNSCGNSPNKKVNYNNNNYYKYTKDKEPHFSSSYDALGAYRQKRIGLNSPLWLRWKLDQRIVGSREVPIEVQYESFGTYHEIYAHYLVVGNRKKEIRSIYIRTTLGHISFYREIEEAIQGFSRAYSYTI</sequence>
<gene>
    <name evidence="1" type="primary">rpoC1</name>
</gene>
<keyword id="KW-0150">Chloroplast</keyword>
<keyword id="KW-0240">DNA-directed RNA polymerase</keyword>
<keyword id="KW-0460">Magnesium</keyword>
<keyword id="KW-0479">Metal-binding</keyword>
<keyword id="KW-0548">Nucleotidyltransferase</keyword>
<keyword id="KW-0934">Plastid</keyword>
<keyword id="KW-1185">Reference proteome</keyword>
<keyword id="KW-0804">Transcription</keyword>
<keyword id="KW-0808">Transferase</keyword>
<keyword id="KW-0862">Zinc</keyword>
<accession>P16024</accession>
<geneLocation type="chloroplast"/>